<name>IF1C_CERDE</name>
<feature type="chain" id="PRO_0000338958" description="Translation initiation factor IF-1, chloroplastic">
    <location>
        <begin position="1"/>
        <end position="77"/>
    </location>
</feature>
<feature type="domain" description="S1-like" evidence="1">
    <location>
        <begin position="1"/>
        <end position="71"/>
    </location>
</feature>
<reference key="1">
    <citation type="journal article" date="2007" name="Proc. Natl. Acad. Sci. U.S.A.">
        <title>Using plastid genome-scale data to resolve enigmatic relationships among basal angiosperms.</title>
        <authorList>
            <person name="Moore M.J."/>
            <person name="Bell C.D."/>
            <person name="Soltis P.S."/>
            <person name="Soltis D.E."/>
        </authorList>
    </citation>
    <scope>NUCLEOTIDE SEQUENCE [LARGE SCALE GENOMIC DNA]</scope>
</reference>
<geneLocation type="chloroplast"/>
<accession>A8SED8</accession>
<dbReference type="EMBL" id="EF614270">
    <property type="protein sequence ID" value="ABQ81486.1"/>
    <property type="molecule type" value="Genomic_DNA"/>
</dbReference>
<dbReference type="RefSeq" id="YP_001542482.1">
    <property type="nucleotide sequence ID" value="NC_009962.1"/>
</dbReference>
<dbReference type="SMR" id="A8SED8"/>
<dbReference type="GeneID" id="5729436"/>
<dbReference type="GO" id="GO:0009507">
    <property type="term" value="C:chloroplast"/>
    <property type="evidence" value="ECO:0007669"/>
    <property type="project" value="UniProtKB-SubCell"/>
</dbReference>
<dbReference type="GO" id="GO:0005829">
    <property type="term" value="C:cytosol"/>
    <property type="evidence" value="ECO:0007669"/>
    <property type="project" value="TreeGrafter"/>
</dbReference>
<dbReference type="GO" id="GO:0043022">
    <property type="term" value="F:ribosome binding"/>
    <property type="evidence" value="ECO:0007669"/>
    <property type="project" value="UniProtKB-UniRule"/>
</dbReference>
<dbReference type="GO" id="GO:0019843">
    <property type="term" value="F:rRNA binding"/>
    <property type="evidence" value="ECO:0007669"/>
    <property type="project" value="UniProtKB-UniRule"/>
</dbReference>
<dbReference type="GO" id="GO:0003743">
    <property type="term" value="F:translation initiation factor activity"/>
    <property type="evidence" value="ECO:0007669"/>
    <property type="project" value="UniProtKB-UniRule"/>
</dbReference>
<dbReference type="CDD" id="cd04451">
    <property type="entry name" value="S1_IF1"/>
    <property type="match status" value="1"/>
</dbReference>
<dbReference type="FunFam" id="2.40.50.140:FF:000019">
    <property type="entry name" value="Translation initiation factor IF-1, chloroplastic"/>
    <property type="match status" value="1"/>
</dbReference>
<dbReference type="Gene3D" id="2.40.50.140">
    <property type="entry name" value="Nucleic acid-binding proteins"/>
    <property type="match status" value="1"/>
</dbReference>
<dbReference type="HAMAP" id="MF_00075">
    <property type="entry name" value="IF_1"/>
    <property type="match status" value="1"/>
</dbReference>
<dbReference type="InterPro" id="IPR012340">
    <property type="entry name" value="NA-bd_OB-fold"/>
</dbReference>
<dbReference type="InterPro" id="IPR006196">
    <property type="entry name" value="RNA-binding_domain_S1_IF1"/>
</dbReference>
<dbReference type="InterPro" id="IPR003029">
    <property type="entry name" value="S1_domain"/>
</dbReference>
<dbReference type="InterPro" id="IPR004368">
    <property type="entry name" value="TIF_IF1"/>
</dbReference>
<dbReference type="NCBIfam" id="TIGR00008">
    <property type="entry name" value="infA"/>
    <property type="match status" value="1"/>
</dbReference>
<dbReference type="PANTHER" id="PTHR33370">
    <property type="entry name" value="TRANSLATION INITIATION FACTOR IF-1, CHLOROPLASTIC"/>
    <property type="match status" value="1"/>
</dbReference>
<dbReference type="PANTHER" id="PTHR33370:SF1">
    <property type="entry name" value="TRANSLATION INITIATION FACTOR IF-1, CHLOROPLASTIC"/>
    <property type="match status" value="1"/>
</dbReference>
<dbReference type="Pfam" id="PF01176">
    <property type="entry name" value="eIF-1a"/>
    <property type="match status" value="1"/>
</dbReference>
<dbReference type="SMART" id="SM00316">
    <property type="entry name" value="S1"/>
    <property type="match status" value="1"/>
</dbReference>
<dbReference type="SUPFAM" id="SSF50249">
    <property type="entry name" value="Nucleic acid-binding proteins"/>
    <property type="match status" value="1"/>
</dbReference>
<dbReference type="PROSITE" id="PS50832">
    <property type="entry name" value="S1_IF1_TYPE"/>
    <property type="match status" value="1"/>
</dbReference>
<keyword id="KW-0150">Chloroplast</keyword>
<keyword id="KW-0396">Initiation factor</keyword>
<keyword id="KW-0934">Plastid</keyword>
<keyword id="KW-0648">Protein biosynthesis</keyword>
<keyword id="KW-0694">RNA-binding</keyword>
<keyword id="KW-0699">rRNA-binding</keyword>
<sequence length="77" mass="9122">MKEQKLIHEGLITESLPNGMFRVRLDNEKMILGYVSGRIRRSFIRILPGDRVKIEVSRYDSTRGRIIYRLRNKDSND</sequence>
<gene>
    <name evidence="1" type="primary">infA</name>
</gene>
<comment type="function">
    <text evidence="1">One of the essential components for the initiation of protein synthesis. Stabilizes the binding of IF-2 and IF-3 on the 30S subunit to which N-formylmethionyl-tRNA(fMet) subsequently binds. Helps modulate mRNA selection, yielding the 30S pre-initiation complex (PIC). Upon addition of the 50S ribosomal subunit IF-1, IF-2 and IF-3 are released leaving the mature 70S translation initiation complex.</text>
</comment>
<comment type="subunit">
    <text evidence="1">Component of the 30S ribosomal translation pre-initiation complex which assembles on the 30S ribosome in the order IF-2 and IF-3, IF-1 and N-formylmethionyl-tRNA(fMet); mRNA recruitment can occur at any time during PIC assembly.</text>
</comment>
<comment type="subcellular location">
    <subcellularLocation>
        <location evidence="1">Plastid</location>
        <location evidence="1">Chloroplast</location>
    </subcellularLocation>
</comment>
<comment type="similarity">
    <text evidence="1">Belongs to the IF-1 family.</text>
</comment>
<organism>
    <name type="scientific">Ceratophyllum demersum</name>
    <name type="common">Rigid hornwort</name>
    <name type="synonym">Coontail</name>
    <dbReference type="NCBI Taxonomy" id="4428"/>
    <lineage>
        <taxon>Eukaryota</taxon>
        <taxon>Viridiplantae</taxon>
        <taxon>Streptophyta</taxon>
        <taxon>Embryophyta</taxon>
        <taxon>Tracheophyta</taxon>
        <taxon>Spermatophyta</taxon>
        <taxon>Magnoliopsida</taxon>
        <taxon>Ceratophyllales</taxon>
        <taxon>Ceratophyllaceae</taxon>
        <taxon>Ceratophyllum</taxon>
    </lineage>
</organism>
<protein>
    <recommendedName>
        <fullName evidence="1">Translation initiation factor IF-1, chloroplastic</fullName>
    </recommendedName>
</protein>
<evidence type="ECO:0000255" key="1">
    <source>
        <dbReference type="HAMAP-Rule" id="MF_00075"/>
    </source>
</evidence>
<proteinExistence type="inferred from homology"/>